<proteinExistence type="inferred from homology"/>
<accession>Q88VR5</accession>
<accession>F9UPT7</accession>
<protein>
    <recommendedName>
        <fullName evidence="1">Small ribosomal subunit protein bS21</fullName>
    </recommendedName>
    <alternativeName>
        <fullName evidence="3">30S ribosomal protein S21</fullName>
    </alternativeName>
</protein>
<name>RS21_LACPL</name>
<keyword id="KW-1185">Reference proteome</keyword>
<keyword id="KW-0687">Ribonucleoprotein</keyword>
<keyword id="KW-0689">Ribosomal protein</keyword>
<gene>
    <name evidence="1" type="primary">rpsU</name>
    <name type="ordered locus">lp_1973</name>
</gene>
<reference key="1">
    <citation type="journal article" date="2003" name="Proc. Natl. Acad. Sci. U.S.A.">
        <title>Complete genome sequence of Lactobacillus plantarum WCFS1.</title>
        <authorList>
            <person name="Kleerebezem M."/>
            <person name="Boekhorst J."/>
            <person name="van Kranenburg R."/>
            <person name="Molenaar D."/>
            <person name="Kuipers O.P."/>
            <person name="Leer R."/>
            <person name="Tarchini R."/>
            <person name="Peters S.A."/>
            <person name="Sandbrink H.M."/>
            <person name="Fiers M.W.E.J."/>
            <person name="Stiekema W."/>
            <person name="Klein Lankhorst R.M."/>
            <person name="Bron P.A."/>
            <person name="Hoffer S.M."/>
            <person name="Nierop Groot M.N."/>
            <person name="Kerkhoven R."/>
            <person name="De Vries M."/>
            <person name="Ursing B."/>
            <person name="De Vos W.M."/>
            <person name="Siezen R.J."/>
        </authorList>
    </citation>
    <scope>NUCLEOTIDE SEQUENCE [LARGE SCALE GENOMIC DNA]</scope>
    <source>
        <strain>ATCC BAA-793 / NCIMB 8826 / WCFS1</strain>
    </source>
</reference>
<reference key="2">
    <citation type="journal article" date="2012" name="J. Bacteriol.">
        <title>Complete resequencing and reannotation of the Lactobacillus plantarum WCFS1 genome.</title>
        <authorList>
            <person name="Siezen R.J."/>
            <person name="Francke C."/>
            <person name="Renckens B."/>
            <person name="Boekhorst J."/>
            <person name="Wels M."/>
            <person name="Kleerebezem M."/>
            <person name="van Hijum S.A."/>
        </authorList>
    </citation>
    <scope>NUCLEOTIDE SEQUENCE [LARGE SCALE GENOMIC DNA]</scope>
    <scope>GENOME REANNOTATION</scope>
    <source>
        <strain>ATCC BAA-793 / NCIMB 8826 / WCFS1</strain>
    </source>
</reference>
<dbReference type="EMBL" id="AL935263">
    <property type="protein sequence ID" value="CCC79226.1"/>
    <property type="molecule type" value="Genomic_DNA"/>
</dbReference>
<dbReference type="RefSeq" id="WP_003638914.1">
    <property type="nucleotide sequence ID" value="NC_004567.2"/>
</dbReference>
<dbReference type="RefSeq" id="YP_004889740.1">
    <property type="nucleotide sequence ID" value="NC_004567.2"/>
</dbReference>
<dbReference type="SMR" id="Q88VR5"/>
<dbReference type="STRING" id="220668.lp_1973"/>
<dbReference type="EnsemblBacteria" id="CCC79226">
    <property type="protein sequence ID" value="CCC79226"/>
    <property type="gene ID" value="lp_1973"/>
</dbReference>
<dbReference type="GeneID" id="89669282"/>
<dbReference type="KEGG" id="lpl:lp_1973"/>
<dbReference type="PATRIC" id="fig|220668.9.peg.1666"/>
<dbReference type="eggNOG" id="COG0828">
    <property type="taxonomic scope" value="Bacteria"/>
</dbReference>
<dbReference type="HOGENOM" id="CLU_159258_3_2_9"/>
<dbReference type="OrthoDB" id="9799244at2"/>
<dbReference type="PhylomeDB" id="Q88VR5"/>
<dbReference type="Proteomes" id="UP000000432">
    <property type="component" value="Chromosome"/>
</dbReference>
<dbReference type="GO" id="GO:1990904">
    <property type="term" value="C:ribonucleoprotein complex"/>
    <property type="evidence" value="ECO:0007669"/>
    <property type="project" value="UniProtKB-KW"/>
</dbReference>
<dbReference type="GO" id="GO:0005840">
    <property type="term" value="C:ribosome"/>
    <property type="evidence" value="ECO:0007669"/>
    <property type="project" value="UniProtKB-KW"/>
</dbReference>
<dbReference type="GO" id="GO:0003735">
    <property type="term" value="F:structural constituent of ribosome"/>
    <property type="evidence" value="ECO:0007669"/>
    <property type="project" value="InterPro"/>
</dbReference>
<dbReference type="GO" id="GO:0006412">
    <property type="term" value="P:translation"/>
    <property type="evidence" value="ECO:0007669"/>
    <property type="project" value="UniProtKB-UniRule"/>
</dbReference>
<dbReference type="Gene3D" id="1.20.5.1150">
    <property type="entry name" value="Ribosomal protein S8"/>
    <property type="match status" value="1"/>
</dbReference>
<dbReference type="HAMAP" id="MF_00358">
    <property type="entry name" value="Ribosomal_bS21"/>
    <property type="match status" value="1"/>
</dbReference>
<dbReference type="InterPro" id="IPR001911">
    <property type="entry name" value="Ribosomal_bS21"/>
</dbReference>
<dbReference type="InterPro" id="IPR018278">
    <property type="entry name" value="Ribosomal_bS21_CS"/>
</dbReference>
<dbReference type="InterPro" id="IPR038380">
    <property type="entry name" value="Ribosomal_bS21_sf"/>
</dbReference>
<dbReference type="NCBIfam" id="TIGR00030">
    <property type="entry name" value="S21p"/>
    <property type="match status" value="1"/>
</dbReference>
<dbReference type="PANTHER" id="PTHR21109">
    <property type="entry name" value="MITOCHONDRIAL 28S RIBOSOMAL PROTEIN S21"/>
    <property type="match status" value="1"/>
</dbReference>
<dbReference type="PANTHER" id="PTHR21109:SF22">
    <property type="entry name" value="SMALL RIBOSOMAL SUBUNIT PROTEIN BS21"/>
    <property type="match status" value="1"/>
</dbReference>
<dbReference type="Pfam" id="PF01165">
    <property type="entry name" value="Ribosomal_S21"/>
    <property type="match status" value="1"/>
</dbReference>
<dbReference type="PRINTS" id="PR00976">
    <property type="entry name" value="RIBOSOMALS21"/>
</dbReference>
<dbReference type="PROSITE" id="PS01181">
    <property type="entry name" value="RIBOSOMAL_S21"/>
    <property type="match status" value="1"/>
</dbReference>
<comment type="similarity">
    <text evidence="1">Belongs to the bacterial ribosomal protein bS21 family.</text>
</comment>
<organism>
    <name type="scientific">Lactiplantibacillus plantarum (strain ATCC BAA-793 / NCIMB 8826 / WCFS1)</name>
    <name type="common">Lactobacillus plantarum</name>
    <dbReference type="NCBI Taxonomy" id="220668"/>
    <lineage>
        <taxon>Bacteria</taxon>
        <taxon>Bacillati</taxon>
        <taxon>Bacillota</taxon>
        <taxon>Bacilli</taxon>
        <taxon>Lactobacillales</taxon>
        <taxon>Lactobacillaceae</taxon>
        <taxon>Lactiplantibacillus</taxon>
    </lineage>
</organism>
<evidence type="ECO:0000255" key="1">
    <source>
        <dbReference type="HAMAP-Rule" id="MF_00358"/>
    </source>
</evidence>
<evidence type="ECO:0000256" key="2">
    <source>
        <dbReference type="SAM" id="MobiDB-lite"/>
    </source>
</evidence>
<evidence type="ECO:0000305" key="3"/>
<feature type="chain" id="PRO_0000178346" description="Small ribosomal subunit protein bS21">
    <location>
        <begin position="1"/>
        <end position="62"/>
    </location>
</feature>
<feature type="region of interest" description="Disordered" evidence="2">
    <location>
        <begin position="43"/>
        <end position="62"/>
    </location>
</feature>
<feature type="compositionally biased region" description="Basic and acidic residues" evidence="2">
    <location>
        <begin position="43"/>
        <end position="52"/>
    </location>
</feature>
<feature type="compositionally biased region" description="Basic residues" evidence="2">
    <location>
        <begin position="53"/>
        <end position="62"/>
    </location>
</feature>
<sequence length="62" mass="7560">MAKTVVRKNESLDDALRRFKRTVSKSGTLQEYRKREFYEKPSVKKKLKSEAARKRKNRRRFK</sequence>